<gene>
    <name evidence="7" type="primary">rdc2</name>
</gene>
<organism>
    <name type="scientific">Metacordyceps chlamydosporia</name>
    <name type="common">Nematophagous fungus</name>
    <name type="synonym">Pochonia chlamydosporia</name>
    <dbReference type="NCBI Taxonomy" id="280754"/>
    <lineage>
        <taxon>Eukaryota</taxon>
        <taxon>Fungi</taxon>
        <taxon>Dikarya</taxon>
        <taxon>Ascomycota</taxon>
        <taxon>Pezizomycotina</taxon>
        <taxon>Sordariomycetes</taxon>
        <taxon>Hypocreomycetidae</taxon>
        <taxon>Hypocreales</taxon>
        <taxon>Clavicipitaceae</taxon>
        <taxon>Pochonia</taxon>
    </lineage>
</organism>
<accession>B3FWT7</accession>
<feature type="signal peptide" evidence="2">
    <location>
        <begin position="1"/>
        <end position="21"/>
    </location>
</feature>
<feature type="chain" id="PRO_0000437614" description="Flavin-dependent halogenase rdc2" evidence="2">
    <location>
        <begin position="22"/>
        <end position="519"/>
    </location>
</feature>
<feature type="binding site" evidence="1">
    <location>
        <position position="14"/>
    </location>
    <ligand>
        <name>FAD</name>
        <dbReference type="ChEBI" id="CHEBI:57692"/>
    </ligand>
</feature>
<feature type="binding site" evidence="1">
    <location>
        <position position="17"/>
    </location>
    <ligand>
        <name>FAD</name>
        <dbReference type="ChEBI" id="CHEBI:57692"/>
    </ligand>
</feature>
<feature type="binding site" evidence="1">
    <location>
        <position position="47"/>
    </location>
    <ligand>
        <name>FAD</name>
        <dbReference type="ChEBI" id="CHEBI:57692"/>
    </ligand>
</feature>
<feature type="binding site" evidence="1">
    <location>
        <position position="324"/>
    </location>
    <ligand>
        <name>chloride</name>
        <dbReference type="ChEBI" id="CHEBI:17996"/>
    </ligand>
</feature>
<feature type="binding site" evidence="1">
    <location>
        <position position="325"/>
    </location>
    <ligand>
        <name>chloride</name>
        <dbReference type="ChEBI" id="CHEBI:17996"/>
    </ligand>
</feature>
<dbReference type="EC" id="1.14.14.-" evidence="4 5"/>
<dbReference type="EMBL" id="EU520419">
    <property type="protein sequence ID" value="ACD39771.1"/>
    <property type="molecule type" value="Genomic_DNA"/>
</dbReference>
<dbReference type="SMR" id="B3FWT7"/>
<dbReference type="GO" id="GO:0140907">
    <property type="term" value="F:flavin-dependent halogenase activity"/>
    <property type="evidence" value="ECO:0000314"/>
    <property type="project" value="GO_Central"/>
</dbReference>
<dbReference type="GO" id="GO:0004497">
    <property type="term" value="F:monooxygenase activity"/>
    <property type="evidence" value="ECO:0007669"/>
    <property type="project" value="UniProtKB-KW"/>
</dbReference>
<dbReference type="GO" id="GO:0044550">
    <property type="term" value="P:secondary metabolite biosynthetic process"/>
    <property type="evidence" value="ECO:0000314"/>
    <property type="project" value="GO_Central"/>
</dbReference>
<dbReference type="Gene3D" id="3.50.50.60">
    <property type="entry name" value="FAD/NAD(P)-binding domain"/>
    <property type="match status" value="1"/>
</dbReference>
<dbReference type="InterPro" id="IPR036188">
    <property type="entry name" value="FAD/NAD-bd_sf"/>
</dbReference>
<dbReference type="InterPro" id="IPR050816">
    <property type="entry name" value="Flavin-dep_Halogenase_NPB"/>
</dbReference>
<dbReference type="InterPro" id="IPR006905">
    <property type="entry name" value="Flavin_halogenase"/>
</dbReference>
<dbReference type="PANTHER" id="PTHR43747:SF5">
    <property type="entry name" value="FAD-BINDING DOMAIN-CONTAINING PROTEIN"/>
    <property type="match status" value="1"/>
</dbReference>
<dbReference type="PANTHER" id="PTHR43747">
    <property type="entry name" value="FAD-BINDING PROTEIN"/>
    <property type="match status" value="1"/>
</dbReference>
<dbReference type="Pfam" id="PF04820">
    <property type="entry name" value="Trp_halogenase"/>
    <property type="match status" value="2"/>
</dbReference>
<dbReference type="SUPFAM" id="SSF51905">
    <property type="entry name" value="FAD/NAD(P)-binding domain"/>
    <property type="match status" value="1"/>
</dbReference>
<keyword id="KW-0274">FAD</keyword>
<keyword id="KW-0285">Flavoprotein</keyword>
<keyword id="KW-0503">Monooxygenase</keyword>
<keyword id="KW-0560">Oxidoreductase</keyword>
<keyword id="KW-0732">Signal</keyword>
<sequence length="519" mass="56551">MSVPKSCTILVAGGGPAGSYAAAALAREGNDVVLLEADQHPRYHIGESMLPSLRPLLRFIDLEDKFDAHGFQKKLGAAFKLTSKREGSHGPRGYSWNVVRSESDEILFNHARESGAQAFQGIKINAIEFEPYEEEYPNGEKVANPGKPTSAKWSSKDGSSGDIAFKYLVDATGRIGIMSTKYLKNRHYNEGLKNLAIWGYYKNNIPWAQGTPRENQPFFEGMRDGAGWCWTIPLHNGTVSVGAVMRKDLFFEKKKSLGENATNTQIMAECMKLCPTIGELLAPAELVSDIKQATDYSYSATAYAGPNFRIVGDAGCFIDPFFSSGHHLAVAGALAAAVSINASIKGDCTEYEASRWHAKKVDEGYTLFLLVVMAALKQIRMQENPVLSDVDEDGFDRAFQFLRPEAVKKFTKEDVAQTIDFAVHALNNMAELDMDIPEHMINGDKEGENGVTNGNNGAAKTAGLASNMEKLTNDEEKVLNGLRILGKAAPGGTLADFEGTAIDGLMPRLEHGKLGLNKV</sequence>
<name>RDC2_METCM</name>
<comment type="function">
    <text evidence="3 5 6 9">Flavin-dependent halogenase; part of the gene cluster that mediates the biosynthesis of radicicol, a resorcylic acid lactone (RAL) that irreversibly inhibits the HSP90 molecular chaperone, an important target for cancer chemotherapy (PubMed:18567690). Within the cluster, rdc2 is involved in the chlorination of the resorcylic acid lactone (RAL) structure to convert monocillin I into radicicol (PubMed:18567690, PubMed:20827793). Also chlorinates monocillin II to produce 6-cholomonocillin II and monocilllin IV to produce 13-chloromonocillin IV (PubMed:20827793, PubMed:23312946). In contrast to most fungal halogenases, rdc2 has a broad substrate specificity and can accept a variety of macrolactones as the substrates to generate chlorinated derivatives, including dihydroresorcylide, zearalenone, curvularin, or even curcumin (PubMed:20827793). Rdc2 is able to dichlorinate dihydroresorcylide and monocillin IV (PubMed:20827793). Dihydroresorcylide is first chlorinated at position 11 to produce 11-chlorodihydroresorcylide which can be further chlorinated by rdc2 at possition 13 (PubMed:20827793). Mororeover, rdc2 can incorporate bromine into dihydroresorcylide to yield the corresponding mono- and di-brominated derivatives (PubMed:20827793). Finally, rdc2 is also able to halogenate the isoquinolines 4-hydroxyisoquinoline and 6-hydroxyisoquinoline into 3-chloro-4-hydroxyisoquinoline and 5-chloro-6-hydroxyisoquinoline, respectively (PubMed:23312946). The radicicol cluster encodes only two apparent post-PKS enzymes, a cytochrome P450 monooxygenase (rdc4) and a non-heme halogenase (rdc2) that could introduce the epoxide and the chlorine, respectively. If this cluster includes all the genes required for radicicol biosynthesis, the remaining structural features of radicicol are presumably generated by the PKSs rdc1 and rdc5. The C-2' ketone could arise if the R-PKS rdc5 and NR-PKS rdc1 each carry out four iterations, in contrast to the five iteration-three iteration split for the hypothemycin PKSs. The origin of the cis 5',6' double bond is not known. The radicicol R-PKS rdc5 ER domain may catalyze either double bond isomerization or reduction in the third iteration (Probable) (PubMed:18567690).</text>
</comment>
<comment type="biophysicochemical properties">
    <kinetics>
        <KM evidence="5">281 uM for dihydroresorcylide</KM>
        <KM evidence="5">846 uM for 11-chlorodihydroresorcylide</KM>
    </kinetics>
</comment>
<comment type="pathway">
    <text evidence="3">Secondary metabolite biosynthesis.</text>
</comment>
<comment type="biotechnology">
    <text>Radicicol is an important pharmacophore as an inhibitor of heat shock protein 90 (Hsp90), an ATP-dependent chaperone involved in the post-translational maturation and stabilization of over one hundred proteins, and which activity has been implicated in diverse pathologies ranging from oncology to neurodegenerative and infectious diseases (PubMed:19860733).</text>
</comment>
<comment type="similarity">
    <text evidence="8">Belongs to the flavin-dependent halogenase family.</text>
</comment>
<reference key="1">
    <citation type="journal article" date="2008" name="Appl. Environ. Microbiol.">
        <title>Genes for the biosynthesis of the fungal polyketides hypothemycin from Hypomyces subiculosus and radicicol from Pochonia chlamydosporia.</title>
        <authorList>
            <person name="Reeves C.D."/>
            <person name="Hu Z."/>
            <person name="Reid R."/>
            <person name="Kealey J.T."/>
        </authorList>
    </citation>
    <scope>NUCLEOTIDE SEQUENCE [GENOMIC DNA]</scope>
    <scope>FUNCTION</scope>
    <source>
        <strain>ATCC 16683 / CBS 504.66</strain>
    </source>
</reference>
<reference key="2">
    <citation type="journal article" date="2009" name="Curr. Top. Med. Chem.">
        <title>Hsp90 inhibition with resorcyclic acid lactones (RALs).</title>
        <authorList>
            <person name="Winssinger N."/>
            <person name="Fontaine J.G."/>
            <person name="Barluenga S."/>
        </authorList>
    </citation>
    <scope>REVIEW ON BIOTECHNOLOGY</scope>
</reference>
<reference key="3">
    <citation type="journal article" date="2010" name="ChemBioChem">
        <title>A novel fungal flavin-dependent halogenase for natural product biosynthesis.</title>
        <authorList>
            <person name="Zeng J."/>
            <person name="Zhan J."/>
        </authorList>
    </citation>
    <scope>FUNCTION</scope>
    <scope>CATALYTIC ACTIVITY</scope>
    <scope>BIOPHYSICOCHEMICAL PROPERTIES</scope>
</reference>
<reference key="4">
    <citation type="journal article" date="2013" name="Bioorg. Med. Chem. Lett.">
        <title>Specific chlorination of isoquinolines by a fungal flavin-dependent halogenase.</title>
        <authorList>
            <person name="Zeng J."/>
            <person name="Lytle A.K."/>
            <person name="Gage D."/>
            <person name="Johnson S.J."/>
            <person name="Zhan J."/>
        </authorList>
    </citation>
    <scope>FUNCTION</scope>
    <scope>CATALYTIC ACTIVITY</scope>
</reference>
<protein>
    <recommendedName>
        <fullName evidence="7">Flavin-dependent halogenase rdc2</fullName>
        <ecNumber evidence="4 5">1.14.14.-</ecNumber>
    </recommendedName>
    <alternativeName>
        <fullName evidence="7">Hypothemycin biosynthesis cluster protein rdc2</fullName>
    </alternativeName>
    <alternativeName>
        <fullName evidence="7">Non-heme halogenase rdc2</fullName>
    </alternativeName>
</protein>
<proteinExistence type="evidence at protein level"/>
<evidence type="ECO:0000250" key="1">
    <source>
        <dbReference type="UniProtKB" id="P95480"/>
    </source>
</evidence>
<evidence type="ECO:0000255" key="2"/>
<evidence type="ECO:0000269" key="3">
    <source>
    </source>
</evidence>
<evidence type="ECO:0000269" key="4">
    <source>
    </source>
</evidence>
<evidence type="ECO:0000269" key="5">
    <source>
    </source>
</evidence>
<evidence type="ECO:0000269" key="6">
    <source>
    </source>
</evidence>
<evidence type="ECO:0000303" key="7">
    <source>
    </source>
</evidence>
<evidence type="ECO:0000305" key="8"/>
<evidence type="ECO:0000305" key="9">
    <source>
    </source>
</evidence>